<gene>
    <name evidence="1" type="primary">rpsT</name>
    <name type="ordered locus">Acry_3104</name>
</gene>
<dbReference type="EMBL" id="CP000697">
    <property type="protein sequence ID" value="ABQ32292.1"/>
    <property type="molecule type" value="Genomic_DNA"/>
</dbReference>
<dbReference type="RefSeq" id="WP_007421597.1">
    <property type="nucleotide sequence ID" value="NC_009484.1"/>
</dbReference>
<dbReference type="SMR" id="A5G360"/>
<dbReference type="STRING" id="349163.Acry_3104"/>
<dbReference type="KEGG" id="acr:Acry_3104"/>
<dbReference type="eggNOG" id="COG0268">
    <property type="taxonomic scope" value="Bacteria"/>
</dbReference>
<dbReference type="HOGENOM" id="CLU_160655_3_0_5"/>
<dbReference type="Proteomes" id="UP000000245">
    <property type="component" value="Chromosome"/>
</dbReference>
<dbReference type="GO" id="GO:0005829">
    <property type="term" value="C:cytosol"/>
    <property type="evidence" value="ECO:0007669"/>
    <property type="project" value="TreeGrafter"/>
</dbReference>
<dbReference type="GO" id="GO:0015935">
    <property type="term" value="C:small ribosomal subunit"/>
    <property type="evidence" value="ECO:0007669"/>
    <property type="project" value="TreeGrafter"/>
</dbReference>
<dbReference type="GO" id="GO:0070181">
    <property type="term" value="F:small ribosomal subunit rRNA binding"/>
    <property type="evidence" value="ECO:0007669"/>
    <property type="project" value="TreeGrafter"/>
</dbReference>
<dbReference type="GO" id="GO:0003735">
    <property type="term" value="F:structural constituent of ribosome"/>
    <property type="evidence" value="ECO:0007669"/>
    <property type="project" value="InterPro"/>
</dbReference>
<dbReference type="GO" id="GO:0006412">
    <property type="term" value="P:translation"/>
    <property type="evidence" value="ECO:0007669"/>
    <property type="project" value="UniProtKB-UniRule"/>
</dbReference>
<dbReference type="FunFam" id="1.20.58.110:FF:000001">
    <property type="entry name" value="30S ribosomal protein S20"/>
    <property type="match status" value="1"/>
</dbReference>
<dbReference type="Gene3D" id="1.20.58.110">
    <property type="entry name" value="Ribosomal protein S20"/>
    <property type="match status" value="1"/>
</dbReference>
<dbReference type="HAMAP" id="MF_00500">
    <property type="entry name" value="Ribosomal_bS20"/>
    <property type="match status" value="1"/>
</dbReference>
<dbReference type="InterPro" id="IPR002583">
    <property type="entry name" value="Ribosomal_bS20"/>
</dbReference>
<dbReference type="InterPro" id="IPR036510">
    <property type="entry name" value="Ribosomal_bS20_sf"/>
</dbReference>
<dbReference type="NCBIfam" id="TIGR00029">
    <property type="entry name" value="S20"/>
    <property type="match status" value="1"/>
</dbReference>
<dbReference type="PANTHER" id="PTHR33398">
    <property type="entry name" value="30S RIBOSOMAL PROTEIN S20"/>
    <property type="match status" value="1"/>
</dbReference>
<dbReference type="PANTHER" id="PTHR33398:SF1">
    <property type="entry name" value="SMALL RIBOSOMAL SUBUNIT PROTEIN BS20C"/>
    <property type="match status" value="1"/>
</dbReference>
<dbReference type="Pfam" id="PF01649">
    <property type="entry name" value="Ribosomal_S20p"/>
    <property type="match status" value="1"/>
</dbReference>
<dbReference type="SUPFAM" id="SSF46992">
    <property type="entry name" value="Ribosomal protein S20"/>
    <property type="match status" value="1"/>
</dbReference>
<reference key="1">
    <citation type="submission" date="2007-05" db="EMBL/GenBank/DDBJ databases">
        <title>Complete sequence of chromosome of Acidiphilium cryptum JF-5.</title>
        <authorList>
            <consortium name="US DOE Joint Genome Institute"/>
            <person name="Copeland A."/>
            <person name="Lucas S."/>
            <person name="Lapidus A."/>
            <person name="Barry K."/>
            <person name="Detter J.C."/>
            <person name="Glavina del Rio T."/>
            <person name="Hammon N."/>
            <person name="Israni S."/>
            <person name="Dalin E."/>
            <person name="Tice H."/>
            <person name="Pitluck S."/>
            <person name="Sims D."/>
            <person name="Brettin T."/>
            <person name="Bruce D."/>
            <person name="Han C."/>
            <person name="Schmutz J."/>
            <person name="Larimer F."/>
            <person name="Land M."/>
            <person name="Hauser L."/>
            <person name="Kyrpides N."/>
            <person name="Kim E."/>
            <person name="Magnuson T."/>
            <person name="Richardson P."/>
        </authorList>
    </citation>
    <scope>NUCLEOTIDE SEQUENCE [LARGE SCALE GENOMIC DNA]</scope>
    <source>
        <strain>JF-5</strain>
    </source>
</reference>
<accession>A5G360</accession>
<name>RS20_ACICJ</name>
<feature type="chain" id="PRO_1000014538" description="Small ribosomal subunit protein bS20">
    <location>
        <begin position="1"/>
        <end position="90"/>
    </location>
</feature>
<proteinExistence type="inferred from homology"/>
<keyword id="KW-1185">Reference proteome</keyword>
<keyword id="KW-0687">Ribonucleoprotein</keyword>
<keyword id="KW-0689">Ribosomal protein</keyword>
<keyword id="KW-0694">RNA-binding</keyword>
<keyword id="KW-0699">rRNA-binding</keyword>
<sequence length="90" mass="9878">MANIASAQKRIRQTLVRTARNKARRSRVHSFIRKVEEAIATGNHIEARTAFIAAQPELQRAVTKGVLKANTASRKLSRLSARVKALSASA</sequence>
<organism>
    <name type="scientific">Acidiphilium cryptum (strain JF-5)</name>
    <dbReference type="NCBI Taxonomy" id="349163"/>
    <lineage>
        <taxon>Bacteria</taxon>
        <taxon>Pseudomonadati</taxon>
        <taxon>Pseudomonadota</taxon>
        <taxon>Alphaproteobacteria</taxon>
        <taxon>Acetobacterales</taxon>
        <taxon>Acidocellaceae</taxon>
        <taxon>Acidiphilium</taxon>
    </lineage>
</organism>
<protein>
    <recommendedName>
        <fullName evidence="1">Small ribosomal subunit protein bS20</fullName>
    </recommendedName>
    <alternativeName>
        <fullName evidence="2">30S ribosomal protein S20</fullName>
    </alternativeName>
</protein>
<evidence type="ECO:0000255" key="1">
    <source>
        <dbReference type="HAMAP-Rule" id="MF_00500"/>
    </source>
</evidence>
<evidence type="ECO:0000305" key="2"/>
<comment type="function">
    <text evidence="1">Binds directly to 16S ribosomal RNA.</text>
</comment>
<comment type="similarity">
    <text evidence="1">Belongs to the bacterial ribosomal protein bS20 family.</text>
</comment>